<reference key="1">
    <citation type="journal article" date="2011" name="J. Bacteriol.">
        <title>Complete genome sequence of the Thermophilic Bacterium Exiguobacterium sp. AT1b.</title>
        <authorList>
            <person name="Vishnivetskaya T.A."/>
            <person name="Lucas S."/>
            <person name="Copeland A."/>
            <person name="Lapidus A."/>
            <person name="Glavina del Rio T."/>
            <person name="Dalin E."/>
            <person name="Tice H."/>
            <person name="Bruce D.C."/>
            <person name="Goodwin L.A."/>
            <person name="Pitluck S."/>
            <person name="Saunders E."/>
            <person name="Brettin T."/>
            <person name="Detter C."/>
            <person name="Han C."/>
            <person name="Larimer F."/>
            <person name="Land M.L."/>
            <person name="Hauser L.J."/>
            <person name="Kyrpides N.C."/>
            <person name="Ovchinnikova G."/>
            <person name="Kathariou S."/>
            <person name="Ramaley R.F."/>
            <person name="Rodrigues D.F."/>
            <person name="Hendrix C."/>
            <person name="Richardson P."/>
            <person name="Tiedje J.M."/>
        </authorList>
    </citation>
    <scope>NUCLEOTIDE SEQUENCE [LARGE SCALE GENOMIC DNA]</scope>
    <source>
        <strain>ATCC BAA-1283 / AT1b</strain>
    </source>
</reference>
<evidence type="ECO:0000255" key="1">
    <source>
        <dbReference type="HAMAP-Rule" id="MF_00123"/>
    </source>
</evidence>
<comment type="catalytic activity">
    <reaction evidence="1">
        <text>tRNA(Arg) + L-arginine + ATP = L-arginyl-tRNA(Arg) + AMP + diphosphate</text>
        <dbReference type="Rhea" id="RHEA:20301"/>
        <dbReference type="Rhea" id="RHEA-COMP:9658"/>
        <dbReference type="Rhea" id="RHEA-COMP:9673"/>
        <dbReference type="ChEBI" id="CHEBI:30616"/>
        <dbReference type="ChEBI" id="CHEBI:32682"/>
        <dbReference type="ChEBI" id="CHEBI:33019"/>
        <dbReference type="ChEBI" id="CHEBI:78442"/>
        <dbReference type="ChEBI" id="CHEBI:78513"/>
        <dbReference type="ChEBI" id="CHEBI:456215"/>
        <dbReference type="EC" id="6.1.1.19"/>
    </reaction>
</comment>
<comment type="subunit">
    <text evidence="1">Monomer.</text>
</comment>
<comment type="subcellular location">
    <subcellularLocation>
        <location evidence="1">Cytoplasm</location>
    </subcellularLocation>
</comment>
<comment type="similarity">
    <text evidence="1">Belongs to the class-I aminoacyl-tRNA synthetase family.</text>
</comment>
<proteinExistence type="inferred from homology"/>
<dbReference type="EC" id="6.1.1.19" evidence="1"/>
<dbReference type="EMBL" id="CP001615">
    <property type="protein sequence ID" value="ACQ70958.1"/>
    <property type="molecule type" value="Genomic_DNA"/>
</dbReference>
<dbReference type="RefSeq" id="WP_015880517.1">
    <property type="nucleotide sequence ID" value="NC_012673.1"/>
</dbReference>
<dbReference type="SMR" id="C4L0Z5"/>
<dbReference type="STRING" id="360911.EAT1b_2035"/>
<dbReference type="KEGG" id="eat:EAT1b_2035"/>
<dbReference type="eggNOG" id="COG0018">
    <property type="taxonomic scope" value="Bacteria"/>
</dbReference>
<dbReference type="HOGENOM" id="CLU_006406_6_1_9"/>
<dbReference type="OrthoDB" id="9805987at2"/>
<dbReference type="Proteomes" id="UP000000716">
    <property type="component" value="Chromosome"/>
</dbReference>
<dbReference type="GO" id="GO:0005737">
    <property type="term" value="C:cytoplasm"/>
    <property type="evidence" value="ECO:0007669"/>
    <property type="project" value="UniProtKB-SubCell"/>
</dbReference>
<dbReference type="GO" id="GO:0004814">
    <property type="term" value="F:arginine-tRNA ligase activity"/>
    <property type="evidence" value="ECO:0007669"/>
    <property type="project" value="UniProtKB-UniRule"/>
</dbReference>
<dbReference type="GO" id="GO:0005524">
    <property type="term" value="F:ATP binding"/>
    <property type="evidence" value="ECO:0007669"/>
    <property type="project" value="UniProtKB-UniRule"/>
</dbReference>
<dbReference type="GO" id="GO:0006420">
    <property type="term" value="P:arginyl-tRNA aminoacylation"/>
    <property type="evidence" value="ECO:0007669"/>
    <property type="project" value="UniProtKB-UniRule"/>
</dbReference>
<dbReference type="CDD" id="cd07956">
    <property type="entry name" value="Anticodon_Ia_Arg"/>
    <property type="match status" value="1"/>
</dbReference>
<dbReference type="CDD" id="cd00671">
    <property type="entry name" value="ArgRS_core"/>
    <property type="match status" value="1"/>
</dbReference>
<dbReference type="FunFam" id="3.40.50.620:FF:000116">
    <property type="entry name" value="Arginine--tRNA ligase"/>
    <property type="match status" value="1"/>
</dbReference>
<dbReference type="Gene3D" id="3.30.1360.70">
    <property type="entry name" value="Arginyl tRNA synthetase N-terminal domain"/>
    <property type="match status" value="1"/>
</dbReference>
<dbReference type="Gene3D" id="3.40.50.620">
    <property type="entry name" value="HUPs"/>
    <property type="match status" value="1"/>
</dbReference>
<dbReference type="Gene3D" id="1.10.730.10">
    <property type="entry name" value="Isoleucyl-tRNA Synthetase, Domain 1"/>
    <property type="match status" value="1"/>
</dbReference>
<dbReference type="HAMAP" id="MF_00123">
    <property type="entry name" value="Arg_tRNA_synth"/>
    <property type="match status" value="1"/>
</dbReference>
<dbReference type="InterPro" id="IPR001278">
    <property type="entry name" value="Arg-tRNA-ligase"/>
</dbReference>
<dbReference type="InterPro" id="IPR005148">
    <property type="entry name" value="Arg-tRNA-synth_N"/>
</dbReference>
<dbReference type="InterPro" id="IPR036695">
    <property type="entry name" value="Arg-tRNA-synth_N_sf"/>
</dbReference>
<dbReference type="InterPro" id="IPR035684">
    <property type="entry name" value="ArgRS_core"/>
</dbReference>
<dbReference type="InterPro" id="IPR008909">
    <property type="entry name" value="DALR_anticod-bd"/>
</dbReference>
<dbReference type="InterPro" id="IPR014729">
    <property type="entry name" value="Rossmann-like_a/b/a_fold"/>
</dbReference>
<dbReference type="InterPro" id="IPR009080">
    <property type="entry name" value="tRNAsynth_Ia_anticodon-bd"/>
</dbReference>
<dbReference type="NCBIfam" id="TIGR00456">
    <property type="entry name" value="argS"/>
    <property type="match status" value="1"/>
</dbReference>
<dbReference type="PANTHER" id="PTHR11956:SF5">
    <property type="entry name" value="ARGININE--TRNA LIGASE, CYTOPLASMIC"/>
    <property type="match status" value="1"/>
</dbReference>
<dbReference type="PANTHER" id="PTHR11956">
    <property type="entry name" value="ARGINYL-TRNA SYNTHETASE"/>
    <property type="match status" value="1"/>
</dbReference>
<dbReference type="Pfam" id="PF03485">
    <property type="entry name" value="Arg_tRNA_synt_N"/>
    <property type="match status" value="1"/>
</dbReference>
<dbReference type="Pfam" id="PF05746">
    <property type="entry name" value="DALR_1"/>
    <property type="match status" value="1"/>
</dbReference>
<dbReference type="Pfam" id="PF00750">
    <property type="entry name" value="tRNA-synt_1d"/>
    <property type="match status" value="1"/>
</dbReference>
<dbReference type="PRINTS" id="PR01038">
    <property type="entry name" value="TRNASYNTHARG"/>
</dbReference>
<dbReference type="SMART" id="SM01016">
    <property type="entry name" value="Arg_tRNA_synt_N"/>
    <property type="match status" value="1"/>
</dbReference>
<dbReference type="SMART" id="SM00836">
    <property type="entry name" value="DALR_1"/>
    <property type="match status" value="1"/>
</dbReference>
<dbReference type="SUPFAM" id="SSF47323">
    <property type="entry name" value="Anticodon-binding domain of a subclass of class I aminoacyl-tRNA synthetases"/>
    <property type="match status" value="1"/>
</dbReference>
<dbReference type="SUPFAM" id="SSF55190">
    <property type="entry name" value="Arginyl-tRNA synthetase (ArgRS), N-terminal 'additional' domain"/>
    <property type="match status" value="1"/>
</dbReference>
<dbReference type="SUPFAM" id="SSF52374">
    <property type="entry name" value="Nucleotidylyl transferase"/>
    <property type="match status" value="1"/>
</dbReference>
<feature type="chain" id="PRO_1000203095" description="Arginine--tRNA ligase">
    <location>
        <begin position="1"/>
        <end position="560"/>
    </location>
</feature>
<feature type="short sequence motif" description="'HIGH' region">
    <location>
        <begin position="121"/>
        <end position="131"/>
    </location>
</feature>
<keyword id="KW-0030">Aminoacyl-tRNA synthetase</keyword>
<keyword id="KW-0067">ATP-binding</keyword>
<keyword id="KW-0963">Cytoplasm</keyword>
<keyword id="KW-0436">Ligase</keyword>
<keyword id="KW-0547">Nucleotide-binding</keyword>
<keyword id="KW-0648">Protein biosynthesis</keyword>
<name>SYR_EXISA</name>
<accession>C4L0Z5</accession>
<sequence length="560" mass="63311">MSYERKYAEALSRVIGEELTIDQIEALIEKPKHEAHGDLAFPCFQLAKAYRKAPVMIATDIANELNDELFTKVEAAGPYVNVFLSRDVVSKEIINTVLEEKSEYATHEARNETIVTDFSSPNIAKPFSMGHLRSTVIGNAINQIARKNGYDVVGVNHLGDWGTQFGKLMVAYKKWGDEEAVRANPIAELLKLYVHFHEEAKTQPELEDEGRAWFKKLEDGDAEATELWQWFRDESLKEFQKVYDLLGVKFESFNGEAFYNDKMGRVVEMLEAKNLLVESEGAMVVSLEEENLPPCLIKKKDGATLYATRDLAAAIYRYETYNFVQANYVVGGEQALHFKQLFSVLRKLGYDFVDGMHHVPFGLILQEGKKMSTRKGRIVLLEEVLKEAIEKAQANIEQKNPDLANAQDVARMVGVGAVVFHDLKNERINNIEFDLDSMLKFEGETGPYVQYTNARANSLLRKGNYDGSPFTGADDDYSWGVVTMLNAFPHVITRAHERREPSIISRYVLDLAQAFNKYYGHVRVLEEDAGKQSRLALVKAVTLVLTEGLRLLGVEAPEEM</sequence>
<gene>
    <name evidence="1" type="primary">argS</name>
    <name type="ordered locus">EAT1b_2035</name>
</gene>
<organism>
    <name type="scientific">Exiguobacterium sp. (strain ATCC BAA-1283 / AT1b)</name>
    <dbReference type="NCBI Taxonomy" id="360911"/>
    <lineage>
        <taxon>Bacteria</taxon>
        <taxon>Bacillati</taxon>
        <taxon>Bacillota</taxon>
        <taxon>Bacilli</taxon>
        <taxon>Bacillales</taxon>
        <taxon>Bacillales Family XII. Incertae Sedis</taxon>
        <taxon>Exiguobacterium</taxon>
    </lineage>
</organism>
<protein>
    <recommendedName>
        <fullName evidence="1">Arginine--tRNA ligase</fullName>
        <ecNumber evidence="1">6.1.1.19</ecNumber>
    </recommendedName>
    <alternativeName>
        <fullName evidence="1">Arginyl-tRNA synthetase</fullName>
        <shortName evidence="1">ArgRS</shortName>
    </alternativeName>
</protein>